<comment type="function">
    <text evidence="1">Catalyzes the reversible interconversion of serine and glycine with tetrahydrofolate (THF) serving as the one-carbon carrier. This reaction serves as the major source of one-carbon groups required for the biosynthesis of purines, thymidylate, methionine, and other important biomolecules. Also exhibits THF-independent aldolase activity toward beta-hydroxyamino acids, producing glycine and aldehydes, via a retro-aldol mechanism.</text>
</comment>
<comment type="catalytic activity">
    <reaction evidence="1">
        <text>(6R)-5,10-methylene-5,6,7,8-tetrahydrofolate + glycine + H2O = (6S)-5,6,7,8-tetrahydrofolate + L-serine</text>
        <dbReference type="Rhea" id="RHEA:15481"/>
        <dbReference type="ChEBI" id="CHEBI:15377"/>
        <dbReference type="ChEBI" id="CHEBI:15636"/>
        <dbReference type="ChEBI" id="CHEBI:33384"/>
        <dbReference type="ChEBI" id="CHEBI:57305"/>
        <dbReference type="ChEBI" id="CHEBI:57453"/>
        <dbReference type="EC" id="2.1.2.1"/>
    </reaction>
</comment>
<comment type="cofactor">
    <cofactor evidence="1">
        <name>pyridoxal 5'-phosphate</name>
        <dbReference type="ChEBI" id="CHEBI:597326"/>
    </cofactor>
</comment>
<comment type="pathway">
    <text evidence="1">One-carbon metabolism; tetrahydrofolate interconversion.</text>
</comment>
<comment type="pathway">
    <text evidence="1">Amino-acid biosynthesis; glycine biosynthesis; glycine from L-serine: step 1/1.</text>
</comment>
<comment type="subunit">
    <text evidence="1">Homodimer.</text>
</comment>
<comment type="subcellular location">
    <subcellularLocation>
        <location evidence="1">Cytoplasm</location>
    </subcellularLocation>
</comment>
<comment type="similarity">
    <text evidence="1">Belongs to the SHMT family.</text>
</comment>
<keyword id="KW-0028">Amino-acid biosynthesis</keyword>
<keyword id="KW-0963">Cytoplasm</keyword>
<keyword id="KW-0554">One-carbon metabolism</keyword>
<keyword id="KW-0663">Pyridoxal phosphate</keyword>
<keyword id="KW-1185">Reference proteome</keyword>
<keyword id="KW-0808">Transferase</keyword>
<feature type="chain" id="PRO_0000234997" description="Serine hydroxymethyltransferase">
    <location>
        <begin position="1"/>
        <end position="440"/>
    </location>
</feature>
<feature type="binding site" evidence="1">
    <location>
        <position position="119"/>
    </location>
    <ligand>
        <name>(6S)-5,6,7,8-tetrahydrofolate</name>
        <dbReference type="ChEBI" id="CHEBI:57453"/>
    </ligand>
</feature>
<feature type="binding site" evidence="1">
    <location>
        <begin position="123"/>
        <end position="125"/>
    </location>
    <ligand>
        <name>(6S)-5,6,7,8-tetrahydrofolate</name>
        <dbReference type="ChEBI" id="CHEBI:57453"/>
    </ligand>
</feature>
<feature type="binding site" evidence="1">
    <location>
        <begin position="370"/>
        <end position="372"/>
    </location>
    <ligand>
        <name>(6S)-5,6,7,8-tetrahydrofolate</name>
        <dbReference type="ChEBI" id="CHEBI:57453"/>
    </ligand>
</feature>
<feature type="site" description="Plays an important role in substrate specificity" evidence="1">
    <location>
        <position position="227"/>
    </location>
</feature>
<feature type="modified residue" description="N6-(pyridoxal phosphate)lysine" evidence="1">
    <location>
        <position position="228"/>
    </location>
</feature>
<reference key="1">
    <citation type="submission" date="2005-08" db="EMBL/GenBank/DDBJ databases">
        <title>Complete sequence of Pelodictyon luteolum DSM 273.</title>
        <authorList>
            <consortium name="US DOE Joint Genome Institute"/>
            <person name="Copeland A."/>
            <person name="Lucas S."/>
            <person name="Lapidus A."/>
            <person name="Barry K."/>
            <person name="Detter J.C."/>
            <person name="Glavina T."/>
            <person name="Hammon N."/>
            <person name="Israni S."/>
            <person name="Pitluck S."/>
            <person name="Bryant D."/>
            <person name="Schmutz J."/>
            <person name="Larimer F."/>
            <person name="Land M."/>
            <person name="Kyrpides N."/>
            <person name="Ivanova N."/>
            <person name="Richardson P."/>
        </authorList>
    </citation>
    <scope>NUCLEOTIDE SEQUENCE [LARGE SCALE GENOMIC DNA]</scope>
    <source>
        <strain>DSM 273 / BCRC 81028 / 2530</strain>
    </source>
</reference>
<name>GLYA_CHLL3</name>
<sequence length="440" mass="47799">MDTDILKMQDREVFDAIAGETVRQMETLELIASENFTSRAVMQACGSVMTNKYAEGYPGKRYYGGCEFVDIAEDLARERARKLFGCEYVNVQPHSGSSANMAVLFSVLKPGDRIMGLDLSHGGHLTHGSSVNFSGQMFDARSYGVDRETGIIDMNKVEEMALDFKPRLIICGASAYSQGFDFKAFREIADKVGAFLMADIAHPAGLIAAGLLTDPMPHCHFVTTTTHKTLRGPRGGMIMMGKDFENPMGITIKTKNGPRVKMMSEVMDAEVMPGIQGGPLMHIIAGKAVAFGEALRPEFREYAVQVRKNAASMAERFTSLGYNIVSGGTKNHLMLLDLRNKDVNGKVAENLLHDAGITVNKNMVPFDDKSPFVTSGIRIGTAAMTTRGMKEADATLIAELIDRVITGAAESTIAATCKDVKAEIRSLCLQNPLEGYGVTP</sequence>
<protein>
    <recommendedName>
        <fullName evidence="1">Serine hydroxymethyltransferase</fullName>
        <shortName evidence="1">SHMT</shortName>
        <shortName evidence="1">Serine methylase</shortName>
        <ecNumber evidence="1">2.1.2.1</ecNumber>
    </recommendedName>
</protein>
<proteinExistence type="inferred from homology"/>
<evidence type="ECO:0000255" key="1">
    <source>
        <dbReference type="HAMAP-Rule" id="MF_00051"/>
    </source>
</evidence>
<dbReference type="EC" id="2.1.2.1" evidence="1"/>
<dbReference type="EMBL" id="CP000096">
    <property type="protein sequence ID" value="ABB24444.1"/>
    <property type="molecule type" value="Genomic_DNA"/>
</dbReference>
<dbReference type="RefSeq" id="WP_011358316.1">
    <property type="nucleotide sequence ID" value="NC_007512.1"/>
</dbReference>
<dbReference type="SMR" id="Q3B2I7"/>
<dbReference type="STRING" id="319225.Plut_1590"/>
<dbReference type="KEGG" id="plt:Plut_1590"/>
<dbReference type="eggNOG" id="COG0112">
    <property type="taxonomic scope" value="Bacteria"/>
</dbReference>
<dbReference type="HOGENOM" id="CLU_022477_2_1_10"/>
<dbReference type="OrthoDB" id="9803846at2"/>
<dbReference type="UniPathway" id="UPA00193"/>
<dbReference type="UniPathway" id="UPA00288">
    <property type="reaction ID" value="UER01023"/>
</dbReference>
<dbReference type="Proteomes" id="UP000002709">
    <property type="component" value="Chromosome"/>
</dbReference>
<dbReference type="GO" id="GO:0005829">
    <property type="term" value="C:cytosol"/>
    <property type="evidence" value="ECO:0007669"/>
    <property type="project" value="TreeGrafter"/>
</dbReference>
<dbReference type="GO" id="GO:0004372">
    <property type="term" value="F:glycine hydroxymethyltransferase activity"/>
    <property type="evidence" value="ECO:0007669"/>
    <property type="project" value="UniProtKB-UniRule"/>
</dbReference>
<dbReference type="GO" id="GO:0030170">
    <property type="term" value="F:pyridoxal phosphate binding"/>
    <property type="evidence" value="ECO:0007669"/>
    <property type="project" value="UniProtKB-UniRule"/>
</dbReference>
<dbReference type="GO" id="GO:0019264">
    <property type="term" value="P:glycine biosynthetic process from serine"/>
    <property type="evidence" value="ECO:0007669"/>
    <property type="project" value="UniProtKB-UniRule"/>
</dbReference>
<dbReference type="GO" id="GO:0035999">
    <property type="term" value="P:tetrahydrofolate interconversion"/>
    <property type="evidence" value="ECO:0007669"/>
    <property type="project" value="UniProtKB-UniRule"/>
</dbReference>
<dbReference type="CDD" id="cd00378">
    <property type="entry name" value="SHMT"/>
    <property type="match status" value="1"/>
</dbReference>
<dbReference type="FunFam" id="3.40.640.10:FF:000001">
    <property type="entry name" value="Serine hydroxymethyltransferase"/>
    <property type="match status" value="1"/>
</dbReference>
<dbReference type="Gene3D" id="3.90.1150.10">
    <property type="entry name" value="Aspartate Aminotransferase, domain 1"/>
    <property type="match status" value="1"/>
</dbReference>
<dbReference type="Gene3D" id="3.40.640.10">
    <property type="entry name" value="Type I PLP-dependent aspartate aminotransferase-like (Major domain)"/>
    <property type="match status" value="1"/>
</dbReference>
<dbReference type="HAMAP" id="MF_00051">
    <property type="entry name" value="SHMT"/>
    <property type="match status" value="1"/>
</dbReference>
<dbReference type="InterPro" id="IPR015424">
    <property type="entry name" value="PyrdxlP-dep_Trfase"/>
</dbReference>
<dbReference type="InterPro" id="IPR015421">
    <property type="entry name" value="PyrdxlP-dep_Trfase_major"/>
</dbReference>
<dbReference type="InterPro" id="IPR015422">
    <property type="entry name" value="PyrdxlP-dep_Trfase_small"/>
</dbReference>
<dbReference type="InterPro" id="IPR001085">
    <property type="entry name" value="Ser_HO-MeTrfase"/>
</dbReference>
<dbReference type="InterPro" id="IPR049943">
    <property type="entry name" value="Ser_HO-MeTrfase-like"/>
</dbReference>
<dbReference type="InterPro" id="IPR019798">
    <property type="entry name" value="Ser_HO-MeTrfase_PLP_BS"/>
</dbReference>
<dbReference type="InterPro" id="IPR039429">
    <property type="entry name" value="SHMT-like_dom"/>
</dbReference>
<dbReference type="NCBIfam" id="NF000586">
    <property type="entry name" value="PRK00011.1"/>
    <property type="match status" value="1"/>
</dbReference>
<dbReference type="PANTHER" id="PTHR11680">
    <property type="entry name" value="SERINE HYDROXYMETHYLTRANSFERASE"/>
    <property type="match status" value="1"/>
</dbReference>
<dbReference type="PANTHER" id="PTHR11680:SF35">
    <property type="entry name" value="SERINE HYDROXYMETHYLTRANSFERASE 1"/>
    <property type="match status" value="1"/>
</dbReference>
<dbReference type="Pfam" id="PF00464">
    <property type="entry name" value="SHMT"/>
    <property type="match status" value="1"/>
</dbReference>
<dbReference type="PIRSF" id="PIRSF000412">
    <property type="entry name" value="SHMT"/>
    <property type="match status" value="1"/>
</dbReference>
<dbReference type="SUPFAM" id="SSF53383">
    <property type="entry name" value="PLP-dependent transferases"/>
    <property type="match status" value="1"/>
</dbReference>
<dbReference type="PROSITE" id="PS00096">
    <property type="entry name" value="SHMT"/>
    <property type="match status" value="1"/>
</dbReference>
<organism>
    <name type="scientific">Chlorobium luteolum (strain DSM 273 / BCRC 81028 / 2530)</name>
    <name type="common">Pelodictyon luteolum</name>
    <dbReference type="NCBI Taxonomy" id="319225"/>
    <lineage>
        <taxon>Bacteria</taxon>
        <taxon>Pseudomonadati</taxon>
        <taxon>Chlorobiota</taxon>
        <taxon>Chlorobiia</taxon>
        <taxon>Chlorobiales</taxon>
        <taxon>Chlorobiaceae</taxon>
        <taxon>Chlorobium/Pelodictyon group</taxon>
        <taxon>Pelodictyon</taxon>
    </lineage>
</organism>
<gene>
    <name evidence="1" type="primary">glyA</name>
    <name type="ordered locus">Plut_1590</name>
</gene>
<accession>Q3B2I7</accession>